<protein>
    <recommendedName>
        <fullName>V-type proton ATPase subunit E</fullName>
    </recommendedName>
    <alternativeName>
        <fullName>V-ATPase subunit E</fullName>
    </alternativeName>
</protein>
<feature type="chain" id="PRO_1000115684" description="V-type proton ATPase subunit E">
    <location>
        <begin position="1"/>
        <end position="232"/>
    </location>
</feature>
<evidence type="ECO:0000250" key="1"/>
<evidence type="ECO:0000305" key="2"/>
<organism>
    <name type="scientific">Treponema pallidum subsp. pallidum (strain SS14)</name>
    <dbReference type="NCBI Taxonomy" id="455434"/>
    <lineage>
        <taxon>Bacteria</taxon>
        <taxon>Pseudomonadati</taxon>
        <taxon>Spirochaetota</taxon>
        <taxon>Spirochaetia</taxon>
        <taxon>Spirochaetales</taxon>
        <taxon>Treponemataceae</taxon>
        <taxon>Treponema</taxon>
    </lineage>
</organism>
<proteinExistence type="inferred from homology"/>
<comment type="function">
    <text evidence="1">Produces ATP from ADP in the presence of a proton gradient across the membrane.</text>
</comment>
<comment type="similarity">
    <text evidence="2">Belongs to the V-ATPase E subunit family.</text>
</comment>
<dbReference type="EMBL" id="CP000805">
    <property type="protein sequence ID" value="ACD70850.1"/>
    <property type="molecule type" value="Genomic_DNA"/>
</dbReference>
<dbReference type="RefSeq" id="WP_010881872.1">
    <property type="nucleotide sequence ID" value="NC_010741.1"/>
</dbReference>
<dbReference type="SMR" id="B2S321"/>
<dbReference type="KEGG" id="tpp:TPASS_0424"/>
<dbReference type="PATRIC" id="fig|243276.5.peg.451"/>
<dbReference type="Proteomes" id="UP000001202">
    <property type="component" value="Chromosome"/>
</dbReference>
<dbReference type="GO" id="GO:0006754">
    <property type="term" value="P:ATP biosynthetic process"/>
    <property type="evidence" value="ECO:0007669"/>
    <property type="project" value="UniProtKB-KW"/>
</dbReference>
<dbReference type="GO" id="GO:1902600">
    <property type="term" value="P:proton transmembrane transport"/>
    <property type="evidence" value="ECO:0007669"/>
    <property type="project" value="UniProtKB-KW"/>
</dbReference>
<dbReference type="Gene3D" id="1.20.5.2950">
    <property type="match status" value="1"/>
</dbReference>
<dbReference type="NCBIfam" id="NF002424">
    <property type="entry name" value="PRK01558.1"/>
    <property type="match status" value="1"/>
</dbReference>
<dbReference type="SUPFAM" id="SSF160527">
    <property type="entry name" value="V-type ATPase subunit E-like"/>
    <property type="match status" value="1"/>
</dbReference>
<reference key="1">
    <citation type="journal article" date="2008" name="BMC Microbiol.">
        <title>Complete genome sequence of Treponema pallidum ssp. pallidum strain SS14 determined with oligonucleotide arrays.</title>
        <authorList>
            <person name="Matejkova P."/>
            <person name="Strouhal M."/>
            <person name="Smajs D."/>
            <person name="Norris S.J."/>
            <person name="Palzkill T."/>
            <person name="Petrosino J.F."/>
            <person name="Sodergren E."/>
            <person name="Norton J.E."/>
            <person name="Singh J."/>
            <person name="Richmond T.A."/>
            <person name="Molla M.N."/>
            <person name="Albert T.J."/>
            <person name="Weinstock G.M."/>
        </authorList>
    </citation>
    <scope>NUCLEOTIDE SEQUENCE [LARGE SCALE GENOMIC DNA]</scope>
    <source>
        <strain>SS14</strain>
    </source>
</reference>
<accession>B2S321</accession>
<gene>
    <name type="primary">atpE</name>
    <name type="ordered locus">TPASS_0424</name>
</gene>
<name>VATE_TREPS</name>
<keyword id="KW-0066">ATP synthesis</keyword>
<keyword id="KW-0375">Hydrogen ion transport</keyword>
<keyword id="KW-0406">Ion transport</keyword>
<keyword id="KW-0813">Transport</keyword>
<sequence length="232" mass="24977">MLGESREEAERIVRAAREEAERIVRAAREEAERIESSSLAALSQASRNVLLSFQDSVTRSLRAIISMETAQAYDAGVLRELIPRVVSAWVQAEGDKLELILSPADLRTLEGVFCAALQEQLSAGVELRSDDCLTAGFRIVPAEGGSYYDFSAAAVAQLFSSYVSARVAEVLSLLRRSCDVFLLLPYNAATISSMRRGASFALSGFFGLCATFLGSAGCCGAWKYLVVSRAGA</sequence>